<dbReference type="EMBL" id="CP001015">
    <property type="protein sequence ID" value="ACF55934.1"/>
    <property type="molecule type" value="Genomic_DNA"/>
</dbReference>
<dbReference type="SMR" id="B5E6H3"/>
<dbReference type="KEGG" id="spx:SPG_0213"/>
<dbReference type="HOGENOM" id="CLU_131047_2_1_9"/>
<dbReference type="GO" id="GO:0022625">
    <property type="term" value="C:cytosolic large ribosomal subunit"/>
    <property type="evidence" value="ECO:0007669"/>
    <property type="project" value="TreeGrafter"/>
</dbReference>
<dbReference type="GO" id="GO:0003735">
    <property type="term" value="F:structural constituent of ribosome"/>
    <property type="evidence" value="ECO:0007669"/>
    <property type="project" value="InterPro"/>
</dbReference>
<dbReference type="GO" id="GO:0006412">
    <property type="term" value="P:translation"/>
    <property type="evidence" value="ECO:0007669"/>
    <property type="project" value="UniProtKB-UniRule"/>
</dbReference>
<dbReference type="CDD" id="cd01658">
    <property type="entry name" value="Ribosomal_L30"/>
    <property type="match status" value="1"/>
</dbReference>
<dbReference type="FunFam" id="3.30.1390.20:FF:000001">
    <property type="entry name" value="50S ribosomal protein L30"/>
    <property type="match status" value="1"/>
</dbReference>
<dbReference type="Gene3D" id="3.30.1390.20">
    <property type="entry name" value="Ribosomal protein L30, ferredoxin-like fold domain"/>
    <property type="match status" value="1"/>
</dbReference>
<dbReference type="HAMAP" id="MF_01371_B">
    <property type="entry name" value="Ribosomal_uL30_B"/>
    <property type="match status" value="1"/>
</dbReference>
<dbReference type="InterPro" id="IPR036919">
    <property type="entry name" value="Ribo_uL30_ferredoxin-like_sf"/>
</dbReference>
<dbReference type="InterPro" id="IPR005996">
    <property type="entry name" value="Ribosomal_uL30_bac-type"/>
</dbReference>
<dbReference type="InterPro" id="IPR018038">
    <property type="entry name" value="Ribosomal_uL30_CS"/>
</dbReference>
<dbReference type="InterPro" id="IPR016082">
    <property type="entry name" value="Ribosomal_uL30_ferredoxin-like"/>
</dbReference>
<dbReference type="NCBIfam" id="TIGR01308">
    <property type="entry name" value="rpmD_bact"/>
    <property type="match status" value="1"/>
</dbReference>
<dbReference type="PANTHER" id="PTHR15892:SF2">
    <property type="entry name" value="LARGE RIBOSOMAL SUBUNIT PROTEIN UL30M"/>
    <property type="match status" value="1"/>
</dbReference>
<dbReference type="PANTHER" id="PTHR15892">
    <property type="entry name" value="MITOCHONDRIAL RIBOSOMAL PROTEIN L30"/>
    <property type="match status" value="1"/>
</dbReference>
<dbReference type="Pfam" id="PF00327">
    <property type="entry name" value="Ribosomal_L30"/>
    <property type="match status" value="1"/>
</dbReference>
<dbReference type="PIRSF" id="PIRSF002211">
    <property type="entry name" value="Ribosomal_L30_bac-type"/>
    <property type="match status" value="1"/>
</dbReference>
<dbReference type="SUPFAM" id="SSF55129">
    <property type="entry name" value="Ribosomal protein L30p/L7e"/>
    <property type="match status" value="1"/>
</dbReference>
<dbReference type="PROSITE" id="PS00634">
    <property type="entry name" value="RIBOSOMAL_L30"/>
    <property type="match status" value="1"/>
</dbReference>
<organism>
    <name type="scientific">Streptococcus pneumoniae serotype 19F (strain G54)</name>
    <dbReference type="NCBI Taxonomy" id="512566"/>
    <lineage>
        <taxon>Bacteria</taxon>
        <taxon>Bacillati</taxon>
        <taxon>Bacillota</taxon>
        <taxon>Bacilli</taxon>
        <taxon>Lactobacillales</taxon>
        <taxon>Streptococcaceae</taxon>
        <taxon>Streptococcus</taxon>
    </lineage>
</organism>
<accession>B5E6H3</accession>
<comment type="subunit">
    <text evidence="1">Part of the 50S ribosomal subunit.</text>
</comment>
<comment type="similarity">
    <text evidence="1">Belongs to the universal ribosomal protein uL30 family.</text>
</comment>
<name>RL30_STRP4</name>
<reference key="1">
    <citation type="journal article" date="2001" name="Microb. Drug Resist.">
        <title>Annotated draft genomic sequence from a Streptococcus pneumoniae type 19F clinical isolate.</title>
        <authorList>
            <person name="Dopazo J."/>
            <person name="Mendoza A."/>
            <person name="Herrero J."/>
            <person name="Caldara F."/>
            <person name="Humbert Y."/>
            <person name="Friedli L."/>
            <person name="Guerrier M."/>
            <person name="Grand-Schenk E."/>
            <person name="Gandin C."/>
            <person name="de Francesco M."/>
            <person name="Polissi A."/>
            <person name="Buell G."/>
            <person name="Feger G."/>
            <person name="Garcia E."/>
            <person name="Peitsch M."/>
            <person name="Garcia-Bustos J.F."/>
        </authorList>
    </citation>
    <scope>NUCLEOTIDE SEQUENCE [LARGE SCALE GENOMIC DNA]</scope>
    <source>
        <strain>G54</strain>
    </source>
</reference>
<reference key="2">
    <citation type="submission" date="2008-03" db="EMBL/GenBank/DDBJ databases">
        <title>Pneumococcal beta glucoside metabolism investigated by whole genome comparison.</title>
        <authorList>
            <person name="Mulas L."/>
            <person name="Trappetti C."/>
            <person name="Hakenbeck R."/>
            <person name="Iannelli F."/>
            <person name="Pozzi G."/>
            <person name="Davidsen T.M."/>
            <person name="Tettelin H."/>
            <person name="Oggioni M."/>
        </authorList>
    </citation>
    <scope>NUCLEOTIDE SEQUENCE [LARGE SCALE GENOMIC DNA]</scope>
    <source>
        <strain>G54</strain>
    </source>
</reference>
<protein>
    <recommendedName>
        <fullName evidence="1">Large ribosomal subunit protein uL30</fullName>
    </recommendedName>
    <alternativeName>
        <fullName evidence="2">50S ribosomal protein L30</fullName>
    </alternativeName>
</protein>
<evidence type="ECO:0000255" key="1">
    <source>
        <dbReference type="HAMAP-Rule" id="MF_01371"/>
    </source>
</evidence>
<evidence type="ECO:0000305" key="2"/>
<feature type="chain" id="PRO_1000144724" description="Large ribosomal subunit protein uL30">
    <location>
        <begin position="1"/>
        <end position="60"/>
    </location>
</feature>
<proteinExistence type="inferred from homology"/>
<sequence>MAQIKITLTKSPIGRIPSQRKTVVALGLGKLNSSVIKEDNAAIRGMITAVSHLVTVEEVN</sequence>
<keyword id="KW-0687">Ribonucleoprotein</keyword>
<keyword id="KW-0689">Ribosomal protein</keyword>
<gene>
    <name evidence="1" type="primary">rpmD</name>
    <name type="ordered locus">SPG_0213</name>
</gene>